<proteinExistence type="inferred from homology"/>
<keyword id="KW-0067">ATP-binding</keyword>
<keyword id="KW-0378">Hydrolase</keyword>
<keyword id="KW-0460">Magnesium</keyword>
<keyword id="KW-0479">Metal-binding</keyword>
<keyword id="KW-0511">Multifunctional enzyme</keyword>
<keyword id="KW-0533">Nickel</keyword>
<keyword id="KW-0547">Nucleotide-binding</keyword>
<keyword id="KW-0548">Nucleotidyltransferase</keyword>
<keyword id="KW-1185">Reference proteome</keyword>
<keyword id="KW-0692">RNA repair</keyword>
<keyword id="KW-0694">RNA-binding</keyword>
<keyword id="KW-0808">Transferase</keyword>
<keyword id="KW-0819">tRNA processing</keyword>
<feature type="chain" id="PRO_1000054290" description="Multifunctional CCA protein">
    <location>
        <begin position="1"/>
        <end position="414"/>
    </location>
</feature>
<feature type="domain" description="HD" evidence="1">
    <location>
        <begin position="232"/>
        <end position="333"/>
    </location>
</feature>
<feature type="binding site" evidence="1">
    <location>
        <position position="8"/>
    </location>
    <ligand>
        <name>ATP</name>
        <dbReference type="ChEBI" id="CHEBI:30616"/>
    </ligand>
</feature>
<feature type="binding site" evidence="1">
    <location>
        <position position="8"/>
    </location>
    <ligand>
        <name>CTP</name>
        <dbReference type="ChEBI" id="CHEBI:37563"/>
    </ligand>
</feature>
<feature type="binding site" evidence="1">
    <location>
        <position position="11"/>
    </location>
    <ligand>
        <name>ATP</name>
        <dbReference type="ChEBI" id="CHEBI:30616"/>
    </ligand>
</feature>
<feature type="binding site" evidence="1">
    <location>
        <position position="11"/>
    </location>
    <ligand>
        <name>CTP</name>
        <dbReference type="ChEBI" id="CHEBI:37563"/>
    </ligand>
</feature>
<feature type="binding site" evidence="1">
    <location>
        <position position="21"/>
    </location>
    <ligand>
        <name>Mg(2+)</name>
        <dbReference type="ChEBI" id="CHEBI:18420"/>
    </ligand>
</feature>
<feature type="binding site" evidence="1">
    <location>
        <position position="23"/>
    </location>
    <ligand>
        <name>Mg(2+)</name>
        <dbReference type="ChEBI" id="CHEBI:18420"/>
    </ligand>
</feature>
<feature type="binding site" evidence="1">
    <location>
        <position position="91"/>
    </location>
    <ligand>
        <name>ATP</name>
        <dbReference type="ChEBI" id="CHEBI:30616"/>
    </ligand>
</feature>
<feature type="binding site" evidence="1">
    <location>
        <position position="91"/>
    </location>
    <ligand>
        <name>CTP</name>
        <dbReference type="ChEBI" id="CHEBI:37563"/>
    </ligand>
</feature>
<feature type="binding site" evidence="1">
    <location>
        <position position="143"/>
    </location>
    <ligand>
        <name>ATP</name>
        <dbReference type="ChEBI" id="CHEBI:30616"/>
    </ligand>
</feature>
<feature type="binding site" evidence="1">
    <location>
        <position position="143"/>
    </location>
    <ligand>
        <name>CTP</name>
        <dbReference type="ChEBI" id="CHEBI:37563"/>
    </ligand>
</feature>
<feature type="binding site" evidence="1">
    <location>
        <position position="146"/>
    </location>
    <ligand>
        <name>ATP</name>
        <dbReference type="ChEBI" id="CHEBI:30616"/>
    </ligand>
</feature>
<feature type="binding site" evidence="1">
    <location>
        <position position="146"/>
    </location>
    <ligand>
        <name>CTP</name>
        <dbReference type="ChEBI" id="CHEBI:37563"/>
    </ligand>
</feature>
<reference key="1">
    <citation type="journal article" date="2010" name="PLoS ONE">
        <title>The complete genome sequence of Cupriavidus metallidurans strain CH34, a master survivalist in harsh and anthropogenic environments.</title>
        <authorList>
            <person name="Janssen P.J."/>
            <person name="Van Houdt R."/>
            <person name="Moors H."/>
            <person name="Monsieurs P."/>
            <person name="Morin N."/>
            <person name="Michaux A."/>
            <person name="Benotmane M.A."/>
            <person name="Leys N."/>
            <person name="Vallaeys T."/>
            <person name="Lapidus A."/>
            <person name="Monchy S."/>
            <person name="Medigue C."/>
            <person name="Taghavi S."/>
            <person name="McCorkle S."/>
            <person name="Dunn J."/>
            <person name="van der Lelie D."/>
            <person name="Mergeay M."/>
        </authorList>
    </citation>
    <scope>NUCLEOTIDE SEQUENCE [LARGE SCALE GENOMIC DNA]</scope>
    <source>
        <strain>ATCC 43123 / DSM 2839 / NBRC 102507 / CH34</strain>
    </source>
</reference>
<gene>
    <name evidence="1" type="primary">cca</name>
    <name type="ordered locus">Rmet_0179</name>
</gene>
<protein>
    <recommendedName>
        <fullName evidence="1">Multifunctional CCA protein</fullName>
    </recommendedName>
    <domain>
        <recommendedName>
            <fullName evidence="1">CCA-adding enzyme</fullName>
            <ecNumber evidence="1">2.7.7.72</ecNumber>
        </recommendedName>
        <alternativeName>
            <fullName evidence="1">CCA tRNA nucleotidyltransferase</fullName>
        </alternativeName>
        <alternativeName>
            <fullName evidence="1">tRNA CCA-pyrophosphorylase</fullName>
        </alternativeName>
        <alternativeName>
            <fullName evidence="1">tRNA adenylyl-/cytidylyl-transferase</fullName>
        </alternativeName>
        <alternativeName>
            <fullName evidence="1">tRNA nucleotidyltransferase</fullName>
        </alternativeName>
        <alternativeName>
            <fullName evidence="1">tRNA-NT</fullName>
        </alternativeName>
    </domain>
    <domain>
        <recommendedName>
            <fullName evidence="1">2'-nucleotidase</fullName>
            <ecNumber evidence="1">3.1.3.-</ecNumber>
        </recommendedName>
    </domain>
    <domain>
        <recommendedName>
            <fullName evidence="1">2',3'-cyclic phosphodiesterase</fullName>
            <ecNumber evidence="1">3.1.4.-</ecNumber>
        </recommendedName>
    </domain>
    <domain>
        <recommendedName>
            <fullName evidence="1">Phosphatase</fullName>
            <ecNumber evidence="1">3.1.3.-</ecNumber>
        </recommendedName>
    </domain>
</protein>
<name>CCA_CUPMC</name>
<organism>
    <name type="scientific">Cupriavidus metallidurans (strain ATCC 43123 / DSM 2839 / NBRC 102507 / CH34)</name>
    <name type="common">Ralstonia metallidurans</name>
    <dbReference type="NCBI Taxonomy" id="266264"/>
    <lineage>
        <taxon>Bacteria</taxon>
        <taxon>Pseudomonadati</taxon>
        <taxon>Pseudomonadota</taxon>
        <taxon>Betaproteobacteria</taxon>
        <taxon>Burkholderiales</taxon>
        <taxon>Burkholderiaceae</taxon>
        <taxon>Cupriavidus</taxon>
    </lineage>
</organism>
<dbReference type="EC" id="2.7.7.72" evidence="1"/>
<dbReference type="EC" id="3.1.3.-" evidence="1"/>
<dbReference type="EC" id="3.1.4.-" evidence="1"/>
<dbReference type="EMBL" id="CP000352">
    <property type="protein sequence ID" value="ABF07065.1"/>
    <property type="molecule type" value="Genomic_DNA"/>
</dbReference>
<dbReference type="RefSeq" id="WP_011515088.1">
    <property type="nucleotide sequence ID" value="NC_007973.1"/>
</dbReference>
<dbReference type="SMR" id="Q1LS11"/>
<dbReference type="STRING" id="266264.Rmet_0179"/>
<dbReference type="KEGG" id="rme:Rmet_0179"/>
<dbReference type="eggNOG" id="COG0617">
    <property type="taxonomic scope" value="Bacteria"/>
</dbReference>
<dbReference type="HOGENOM" id="CLU_015961_1_1_4"/>
<dbReference type="Proteomes" id="UP000002429">
    <property type="component" value="Chromosome"/>
</dbReference>
<dbReference type="GO" id="GO:0005524">
    <property type="term" value="F:ATP binding"/>
    <property type="evidence" value="ECO:0007669"/>
    <property type="project" value="UniProtKB-UniRule"/>
</dbReference>
<dbReference type="GO" id="GO:0004810">
    <property type="term" value="F:CCA tRNA nucleotidyltransferase activity"/>
    <property type="evidence" value="ECO:0007669"/>
    <property type="project" value="UniProtKB-UniRule"/>
</dbReference>
<dbReference type="GO" id="GO:0004112">
    <property type="term" value="F:cyclic-nucleotide phosphodiesterase activity"/>
    <property type="evidence" value="ECO:0007669"/>
    <property type="project" value="UniProtKB-UniRule"/>
</dbReference>
<dbReference type="GO" id="GO:0000287">
    <property type="term" value="F:magnesium ion binding"/>
    <property type="evidence" value="ECO:0007669"/>
    <property type="project" value="UniProtKB-UniRule"/>
</dbReference>
<dbReference type="GO" id="GO:0016791">
    <property type="term" value="F:phosphatase activity"/>
    <property type="evidence" value="ECO:0007669"/>
    <property type="project" value="UniProtKB-UniRule"/>
</dbReference>
<dbReference type="GO" id="GO:0000049">
    <property type="term" value="F:tRNA binding"/>
    <property type="evidence" value="ECO:0007669"/>
    <property type="project" value="UniProtKB-UniRule"/>
</dbReference>
<dbReference type="GO" id="GO:0042245">
    <property type="term" value="P:RNA repair"/>
    <property type="evidence" value="ECO:0007669"/>
    <property type="project" value="UniProtKB-KW"/>
</dbReference>
<dbReference type="GO" id="GO:0001680">
    <property type="term" value="P:tRNA 3'-terminal CCA addition"/>
    <property type="evidence" value="ECO:0007669"/>
    <property type="project" value="UniProtKB-UniRule"/>
</dbReference>
<dbReference type="CDD" id="cd00077">
    <property type="entry name" value="HDc"/>
    <property type="match status" value="1"/>
</dbReference>
<dbReference type="CDD" id="cd05398">
    <property type="entry name" value="NT_ClassII-CCAase"/>
    <property type="match status" value="1"/>
</dbReference>
<dbReference type="Gene3D" id="3.30.460.10">
    <property type="entry name" value="Beta Polymerase, domain 2"/>
    <property type="match status" value="1"/>
</dbReference>
<dbReference type="Gene3D" id="1.10.3090.10">
    <property type="entry name" value="cca-adding enzyme, domain 2"/>
    <property type="match status" value="1"/>
</dbReference>
<dbReference type="HAMAP" id="MF_01261">
    <property type="entry name" value="CCA_bact_type1"/>
    <property type="match status" value="1"/>
</dbReference>
<dbReference type="InterPro" id="IPR012006">
    <property type="entry name" value="CCA_bact"/>
</dbReference>
<dbReference type="InterPro" id="IPR003607">
    <property type="entry name" value="HD/PDEase_dom"/>
</dbReference>
<dbReference type="InterPro" id="IPR006674">
    <property type="entry name" value="HD_domain"/>
</dbReference>
<dbReference type="InterPro" id="IPR043519">
    <property type="entry name" value="NT_sf"/>
</dbReference>
<dbReference type="InterPro" id="IPR002646">
    <property type="entry name" value="PolA_pol_head_dom"/>
</dbReference>
<dbReference type="InterPro" id="IPR032828">
    <property type="entry name" value="PolyA_RNA-bd"/>
</dbReference>
<dbReference type="InterPro" id="IPR050124">
    <property type="entry name" value="tRNA_CCA-adding_enzyme"/>
</dbReference>
<dbReference type="NCBIfam" id="NF008137">
    <property type="entry name" value="PRK10885.1"/>
    <property type="match status" value="1"/>
</dbReference>
<dbReference type="PANTHER" id="PTHR47545">
    <property type="entry name" value="MULTIFUNCTIONAL CCA PROTEIN"/>
    <property type="match status" value="1"/>
</dbReference>
<dbReference type="PANTHER" id="PTHR47545:SF1">
    <property type="entry name" value="MULTIFUNCTIONAL CCA PROTEIN"/>
    <property type="match status" value="1"/>
</dbReference>
<dbReference type="Pfam" id="PF01966">
    <property type="entry name" value="HD"/>
    <property type="match status" value="1"/>
</dbReference>
<dbReference type="Pfam" id="PF01743">
    <property type="entry name" value="PolyA_pol"/>
    <property type="match status" value="1"/>
</dbReference>
<dbReference type="Pfam" id="PF12627">
    <property type="entry name" value="PolyA_pol_RNAbd"/>
    <property type="match status" value="1"/>
</dbReference>
<dbReference type="PIRSF" id="PIRSF000813">
    <property type="entry name" value="CCA_bact"/>
    <property type="match status" value="1"/>
</dbReference>
<dbReference type="SUPFAM" id="SSF81301">
    <property type="entry name" value="Nucleotidyltransferase"/>
    <property type="match status" value="1"/>
</dbReference>
<dbReference type="SUPFAM" id="SSF81891">
    <property type="entry name" value="Poly A polymerase C-terminal region-like"/>
    <property type="match status" value="1"/>
</dbReference>
<dbReference type="PROSITE" id="PS51831">
    <property type="entry name" value="HD"/>
    <property type="match status" value="1"/>
</dbReference>
<comment type="function">
    <text evidence="1">Catalyzes the addition and repair of the essential 3'-terminal CCA sequence in tRNAs without using a nucleic acid template. Adds these three nucleotides in the order of C, C, and A to the tRNA nucleotide-73, using CTP and ATP as substrates and producing inorganic pyrophosphate. tRNA 3'-terminal CCA addition is required both for tRNA processing and repair. Also involved in tRNA surveillance by mediating tandem CCA addition to generate a CCACCA at the 3' terminus of unstable tRNAs. While stable tRNAs receive only 3'-terminal CCA, unstable tRNAs are marked with CCACCA and rapidly degraded.</text>
</comment>
<comment type="catalytic activity">
    <reaction evidence="1">
        <text>a tRNA precursor + 2 CTP + ATP = a tRNA with a 3' CCA end + 3 diphosphate</text>
        <dbReference type="Rhea" id="RHEA:14433"/>
        <dbReference type="Rhea" id="RHEA-COMP:10465"/>
        <dbReference type="Rhea" id="RHEA-COMP:10468"/>
        <dbReference type="ChEBI" id="CHEBI:30616"/>
        <dbReference type="ChEBI" id="CHEBI:33019"/>
        <dbReference type="ChEBI" id="CHEBI:37563"/>
        <dbReference type="ChEBI" id="CHEBI:74896"/>
        <dbReference type="ChEBI" id="CHEBI:83071"/>
        <dbReference type="EC" id="2.7.7.72"/>
    </reaction>
</comment>
<comment type="catalytic activity">
    <reaction evidence="1">
        <text>a tRNA with a 3' CCA end + 2 CTP + ATP = a tRNA with a 3' CCACCA end + 3 diphosphate</text>
        <dbReference type="Rhea" id="RHEA:76235"/>
        <dbReference type="Rhea" id="RHEA-COMP:10468"/>
        <dbReference type="Rhea" id="RHEA-COMP:18655"/>
        <dbReference type="ChEBI" id="CHEBI:30616"/>
        <dbReference type="ChEBI" id="CHEBI:33019"/>
        <dbReference type="ChEBI" id="CHEBI:37563"/>
        <dbReference type="ChEBI" id="CHEBI:83071"/>
        <dbReference type="ChEBI" id="CHEBI:195187"/>
    </reaction>
    <physiologicalReaction direction="left-to-right" evidence="1">
        <dbReference type="Rhea" id="RHEA:76236"/>
    </physiologicalReaction>
</comment>
<comment type="cofactor">
    <cofactor evidence="1">
        <name>Mg(2+)</name>
        <dbReference type="ChEBI" id="CHEBI:18420"/>
    </cofactor>
    <text evidence="1">Magnesium is required for nucleotidyltransferase activity.</text>
</comment>
<comment type="cofactor">
    <cofactor evidence="1">
        <name>Ni(2+)</name>
        <dbReference type="ChEBI" id="CHEBI:49786"/>
    </cofactor>
    <text evidence="1">Nickel for phosphatase activity.</text>
</comment>
<comment type="subunit">
    <text evidence="1">Monomer. Can also form homodimers and oligomers.</text>
</comment>
<comment type="domain">
    <text evidence="1">Comprises two domains: an N-terminal domain containing the nucleotidyltransferase activity and a C-terminal HD domain associated with both phosphodiesterase and phosphatase activities.</text>
</comment>
<comment type="miscellaneous">
    <text evidence="1">A single active site specifically recognizes both ATP and CTP and is responsible for their addition.</text>
</comment>
<comment type="similarity">
    <text evidence="1">Belongs to the tRNA nucleotidyltransferase/poly(A) polymerase family. Bacterial CCA-adding enzyme type 1 subfamily.</text>
</comment>
<sequence>MQVYAVGGAVRDQLLGKPSQDRDYVVVGATPADMEAAGFKPVGKDFPVFLHPHTKAEYALARTERKTAVGYKGFAFYTGADVTLEEDLVRRDLTINAMAQAVDEHDNLVGPVIDPYGGQKDLAARKFRHVSDAFAEDPVRILRVARFAARFHEFTVAPETVALMRKIVDAGEVDALVPERVWQELSRGLMEAKPSRMFDVLRECGALAHLLPELDRLWGVPQRPEYHPEVDTGVHVMMVIDYAASVGASLPVRFAAMAHDLGKGTTPEDMLPRHIGHEQRGVKLLEAICQRLRVPNDCRELALVVAREHGNIHRSTEFGAAALTRLVERCDALRKPERFAEALLACEADARGRLGFADKDYPQADRLLAARDAAASVDAGAIAKACGDKVDQIKDRVHKARVAAVAQRLGMAEE</sequence>
<evidence type="ECO:0000255" key="1">
    <source>
        <dbReference type="HAMAP-Rule" id="MF_01261"/>
    </source>
</evidence>
<accession>Q1LS11</accession>